<gene>
    <name type="primary">rpmH</name>
    <name type="ordered locus">HP_1447</name>
</gene>
<protein>
    <recommendedName>
        <fullName evidence="1">Large ribosomal subunit protein bL34</fullName>
    </recommendedName>
    <alternativeName>
        <fullName>50S ribosomal protein L34</fullName>
    </alternativeName>
</protein>
<name>RL34_HELPY</name>
<keyword id="KW-1185">Reference proteome</keyword>
<keyword id="KW-0687">Ribonucleoprotein</keyword>
<keyword id="KW-0689">Ribosomal protein</keyword>
<dbReference type="EMBL" id="AE000511">
    <property type="protein sequence ID" value="AAD08495.1"/>
    <property type="molecule type" value="Genomic_DNA"/>
</dbReference>
<dbReference type="PIR" id="G64700">
    <property type="entry name" value="G64700"/>
</dbReference>
<dbReference type="RefSeq" id="NP_208238.1">
    <property type="nucleotide sequence ID" value="NC_000915.1"/>
</dbReference>
<dbReference type="RefSeq" id="WP_001847286.1">
    <property type="nucleotide sequence ID" value="NC_018939.1"/>
</dbReference>
<dbReference type="SMR" id="P66246"/>
<dbReference type="FunCoup" id="P66246">
    <property type="interactions" value="273"/>
</dbReference>
<dbReference type="STRING" id="85962.HP_1447"/>
<dbReference type="PaxDb" id="85962-C694_07495"/>
<dbReference type="EnsemblBacteria" id="AAD08495">
    <property type="protein sequence ID" value="AAD08495"/>
    <property type="gene ID" value="HP_1447"/>
</dbReference>
<dbReference type="GeneID" id="93236353"/>
<dbReference type="KEGG" id="heo:C694_07495"/>
<dbReference type="KEGG" id="hpy:HP_1447"/>
<dbReference type="PATRIC" id="fig|85962.47.peg.1556"/>
<dbReference type="eggNOG" id="COG0230">
    <property type="taxonomic scope" value="Bacteria"/>
</dbReference>
<dbReference type="InParanoid" id="P66246"/>
<dbReference type="OrthoDB" id="9804164at2"/>
<dbReference type="PhylomeDB" id="P66246"/>
<dbReference type="Proteomes" id="UP000000429">
    <property type="component" value="Chromosome"/>
</dbReference>
<dbReference type="GO" id="GO:1990904">
    <property type="term" value="C:ribonucleoprotein complex"/>
    <property type="evidence" value="ECO:0007669"/>
    <property type="project" value="UniProtKB-KW"/>
</dbReference>
<dbReference type="GO" id="GO:0005840">
    <property type="term" value="C:ribosome"/>
    <property type="evidence" value="ECO:0007669"/>
    <property type="project" value="UniProtKB-KW"/>
</dbReference>
<dbReference type="GO" id="GO:0003735">
    <property type="term" value="F:structural constituent of ribosome"/>
    <property type="evidence" value="ECO:0007669"/>
    <property type="project" value="InterPro"/>
</dbReference>
<dbReference type="GO" id="GO:0006412">
    <property type="term" value="P:translation"/>
    <property type="evidence" value="ECO:0007669"/>
    <property type="project" value="UniProtKB-UniRule"/>
</dbReference>
<dbReference type="FunFam" id="1.10.287.3980:FF:000001">
    <property type="entry name" value="Mitochondrial ribosomal protein L34"/>
    <property type="match status" value="1"/>
</dbReference>
<dbReference type="Gene3D" id="1.10.287.3980">
    <property type="match status" value="1"/>
</dbReference>
<dbReference type="HAMAP" id="MF_00391">
    <property type="entry name" value="Ribosomal_bL34"/>
    <property type="match status" value="1"/>
</dbReference>
<dbReference type="InterPro" id="IPR000271">
    <property type="entry name" value="Ribosomal_bL34"/>
</dbReference>
<dbReference type="InterPro" id="IPR020939">
    <property type="entry name" value="Ribosomal_bL34_CS"/>
</dbReference>
<dbReference type="NCBIfam" id="TIGR01030">
    <property type="entry name" value="rpmH_bact"/>
    <property type="match status" value="1"/>
</dbReference>
<dbReference type="PANTHER" id="PTHR14503:SF4">
    <property type="entry name" value="LARGE RIBOSOMAL SUBUNIT PROTEIN BL34M"/>
    <property type="match status" value="1"/>
</dbReference>
<dbReference type="PANTHER" id="PTHR14503">
    <property type="entry name" value="MITOCHONDRIAL RIBOSOMAL PROTEIN 34 FAMILY MEMBER"/>
    <property type="match status" value="1"/>
</dbReference>
<dbReference type="Pfam" id="PF00468">
    <property type="entry name" value="Ribosomal_L34"/>
    <property type="match status" value="1"/>
</dbReference>
<dbReference type="PROSITE" id="PS00784">
    <property type="entry name" value="RIBOSOMAL_L34"/>
    <property type="match status" value="1"/>
</dbReference>
<accession>P66246</accession>
<accession>P56056</accession>
<evidence type="ECO:0000305" key="1"/>
<feature type="chain" id="PRO_0000187392" description="Large ribosomal subunit protein bL34">
    <location>
        <begin position="1"/>
        <end position="44"/>
    </location>
</feature>
<proteinExistence type="inferred from homology"/>
<sequence>MKRTYQPHNTPRKRTHGFLVRMKTKNGRKVINARRAKGRKKLSV</sequence>
<reference key="1">
    <citation type="journal article" date="1997" name="Nature">
        <title>The complete genome sequence of the gastric pathogen Helicobacter pylori.</title>
        <authorList>
            <person name="Tomb J.-F."/>
            <person name="White O."/>
            <person name="Kerlavage A.R."/>
            <person name="Clayton R.A."/>
            <person name="Sutton G.G."/>
            <person name="Fleischmann R.D."/>
            <person name="Ketchum K.A."/>
            <person name="Klenk H.-P."/>
            <person name="Gill S.R."/>
            <person name="Dougherty B.A."/>
            <person name="Nelson K.E."/>
            <person name="Quackenbush J."/>
            <person name="Zhou L."/>
            <person name="Kirkness E.F."/>
            <person name="Peterson S.N."/>
            <person name="Loftus B.J."/>
            <person name="Richardson D.L."/>
            <person name="Dodson R.J."/>
            <person name="Khalak H.G."/>
            <person name="Glodek A."/>
            <person name="McKenney K."/>
            <person name="FitzGerald L.M."/>
            <person name="Lee N."/>
            <person name="Adams M.D."/>
            <person name="Hickey E.K."/>
            <person name="Berg D.E."/>
            <person name="Gocayne J.D."/>
            <person name="Utterback T.R."/>
            <person name="Peterson J.D."/>
            <person name="Kelley J.M."/>
            <person name="Cotton M.D."/>
            <person name="Weidman J.F."/>
            <person name="Fujii C."/>
            <person name="Bowman C."/>
            <person name="Watthey L."/>
            <person name="Wallin E."/>
            <person name="Hayes W.S."/>
            <person name="Borodovsky M."/>
            <person name="Karp P.D."/>
            <person name="Smith H.O."/>
            <person name="Fraser C.M."/>
            <person name="Venter J.C."/>
        </authorList>
    </citation>
    <scope>NUCLEOTIDE SEQUENCE [LARGE SCALE GENOMIC DNA]</scope>
    <source>
        <strain>ATCC 700392 / 26695</strain>
    </source>
</reference>
<comment type="similarity">
    <text evidence="1">Belongs to the bacterial ribosomal protein bL34 family.</text>
</comment>
<organism>
    <name type="scientific">Helicobacter pylori (strain ATCC 700392 / 26695)</name>
    <name type="common">Campylobacter pylori</name>
    <dbReference type="NCBI Taxonomy" id="85962"/>
    <lineage>
        <taxon>Bacteria</taxon>
        <taxon>Pseudomonadati</taxon>
        <taxon>Campylobacterota</taxon>
        <taxon>Epsilonproteobacteria</taxon>
        <taxon>Campylobacterales</taxon>
        <taxon>Helicobacteraceae</taxon>
        <taxon>Helicobacter</taxon>
    </lineage>
</organism>